<gene>
    <name evidence="1" type="primary">nuoH</name>
    <name type="ordered locus">Pfl01_3609</name>
</gene>
<protein>
    <recommendedName>
        <fullName evidence="1">NADH-quinone oxidoreductase subunit H</fullName>
        <ecNumber evidence="1">7.1.1.-</ecNumber>
    </recommendedName>
    <alternativeName>
        <fullName evidence="1">NADH dehydrogenase I subunit H</fullName>
    </alternativeName>
    <alternativeName>
        <fullName evidence="1">NDH-1 subunit H</fullName>
    </alternativeName>
</protein>
<accession>Q3KA57</accession>
<dbReference type="EC" id="7.1.1.-" evidence="1"/>
<dbReference type="EMBL" id="CP000094">
    <property type="protein sequence ID" value="ABA75347.1"/>
    <property type="molecule type" value="Genomic_DNA"/>
</dbReference>
<dbReference type="RefSeq" id="WP_011334959.1">
    <property type="nucleotide sequence ID" value="NC_007492.2"/>
</dbReference>
<dbReference type="SMR" id="Q3KA57"/>
<dbReference type="KEGG" id="pfo:Pfl01_3609"/>
<dbReference type="eggNOG" id="COG1005">
    <property type="taxonomic scope" value="Bacteria"/>
</dbReference>
<dbReference type="HOGENOM" id="CLU_015134_0_1_6"/>
<dbReference type="Proteomes" id="UP000002704">
    <property type="component" value="Chromosome"/>
</dbReference>
<dbReference type="GO" id="GO:0005886">
    <property type="term" value="C:plasma membrane"/>
    <property type="evidence" value="ECO:0007669"/>
    <property type="project" value="UniProtKB-SubCell"/>
</dbReference>
<dbReference type="GO" id="GO:0003954">
    <property type="term" value="F:NADH dehydrogenase activity"/>
    <property type="evidence" value="ECO:0007669"/>
    <property type="project" value="TreeGrafter"/>
</dbReference>
<dbReference type="GO" id="GO:0016655">
    <property type="term" value="F:oxidoreductase activity, acting on NAD(P)H, quinone or similar compound as acceptor"/>
    <property type="evidence" value="ECO:0007669"/>
    <property type="project" value="UniProtKB-UniRule"/>
</dbReference>
<dbReference type="GO" id="GO:0048038">
    <property type="term" value="F:quinone binding"/>
    <property type="evidence" value="ECO:0007669"/>
    <property type="project" value="UniProtKB-KW"/>
</dbReference>
<dbReference type="GO" id="GO:0009060">
    <property type="term" value="P:aerobic respiration"/>
    <property type="evidence" value="ECO:0007669"/>
    <property type="project" value="TreeGrafter"/>
</dbReference>
<dbReference type="HAMAP" id="MF_01350">
    <property type="entry name" value="NDH1_NuoH"/>
    <property type="match status" value="1"/>
</dbReference>
<dbReference type="InterPro" id="IPR001694">
    <property type="entry name" value="NADH_UbQ_OxRdtase_su1/FPO"/>
</dbReference>
<dbReference type="InterPro" id="IPR018086">
    <property type="entry name" value="NADH_UbQ_OxRdtase_su1_CS"/>
</dbReference>
<dbReference type="NCBIfam" id="NF004740">
    <property type="entry name" value="PRK06076.1-1"/>
    <property type="match status" value="1"/>
</dbReference>
<dbReference type="NCBIfam" id="NF004741">
    <property type="entry name" value="PRK06076.1-2"/>
    <property type="match status" value="1"/>
</dbReference>
<dbReference type="PANTHER" id="PTHR11432">
    <property type="entry name" value="NADH DEHYDROGENASE SUBUNIT 1"/>
    <property type="match status" value="1"/>
</dbReference>
<dbReference type="PANTHER" id="PTHR11432:SF3">
    <property type="entry name" value="NADH-UBIQUINONE OXIDOREDUCTASE CHAIN 1"/>
    <property type="match status" value="1"/>
</dbReference>
<dbReference type="Pfam" id="PF00146">
    <property type="entry name" value="NADHdh"/>
    <property type="match status" value="1"/>
</dbReference>
<dbReference type="PROSITE" id="PS00667">
    <property type="entry name" value="COMPLEX1_ND1_1"/>
    <property type="match status" value="1"/>
</dbReference>
<dbReference type="PROSITE" id="PS00668">
    <property type="entry name" value="COMPLEX1_ND1_2"/>
    <property type="match status" value="1"/>
</dbReference>
<evidence type="ECO:0000255" key="1">
    <source>
        <dbReference type="HAMAP-Rule" id="MF_01350"/>
    </source>
</evidence>
<proteinExistence type="inferred from homology"/>
<name>NUOH_PSEPF</name>
<sequence>MTWFTPEVIDVILTVIKAIVILLAVVVAGALLSFVERRLLGWWQDRYGPNRVGPFGMFQIAADMLKMFFKEDWTPPFADKVIFTLAPVVAMSALLIAFAIIPITPTWGVADLNIGLLFFFAMAGLSVYAVLFAGWSSNNKFALLGSLRASAQTVSYEVFMGLALMGIVVQVGSFNMRDIVEYQAQNLWFIIPQFFGFCTFFIAGVAVTHRHPFDQPEAEQELADGYHIEYAGMKWGMFFVGEYIGIILISALLVTLFFGGWHGPFGILPQLSFVWFALKTAFFILLFILLRASIPRPRYDQVMDFSWKFCLPLTLINLLVTAAIVLWNTPAVAVQ</sequence>
<organism>
    <name type="scientific">Pseudomonas fluorescens (strain Pf0-1)</name>
    <dbReference type="NCBI Taxonomy" id="205922"/>
    <lineage>
        <taxon>Bacteria</taxon>
        <taxon>Pseudomonadati</taxon>
        <taxon>Pseudomonadota</taxon>
        <taxon>Gammaproteobacteria</taxon>
        <taxon>Pseudomonadales</taxon>
        <taxon>Pseudomonadaceae</taxon>
        <taxon>Pseudomonas</taxon>
    </lineage>
</organism>
<comment type="function">
    <text evidence="1">NDH-1 shuttles electrons from NADH, via FMN and iron-sulfur (Fe-S) centers, to quinones in the respiratory chain. The immediate electron acceptor for the enzyme in this species is believed to be ubiquinone. Couples the redox reaction to proton translocation (for every two electrons transferred, four hydrogen ions are translocated across the cytoplasmic membrane), and thus conserves the redox energy in a proton gradient. This subunit may bind ubiquinone.</text>
</comment>
<comment type="catalytic activity">
    <reaction evidence="1">
        <text>a quinone + NADH + 5 H(+)(in) = a quinol + NAD(+) + 4 H(+)(out)</text>
        <dbReference type="Rhea" id="RHEA:57888"/>
        <dbReference type="ChEBI" id="CHEBI:15378"/>
        <dbReference type="ChEBI" id="CHEBI:24646"/>
        <dbReference type="ChEBI" id="CHEBI:57540"/>
        <dbReference type="ChEBI" id="CHEBI:57945"/>
        <dbReference type="ChEBI" id="CHEBI:132124"/>
    </reaction>
</comment>
<comment type="subunit">
    <text evidence="1">NDH-1 is composed of 13 different subunits. Subunits NuoA, H, J, K, L, M, N constitute the membrane sector of the complex.</text>
</comment>
<comment type="subcellular location">
    <subcellularLocation>
        <location evidence="1">Cell inner membrane</location>
        <topology evidence="1">Multi-pass membrane protein</topology>
    </subcellularLocation>
</comment>
<comment type="similarity">
    <text evidence="1">Belongs to the complex I subunit 1 family.</text>
</comment>
<reference key="1">
    <citation type="journal article" date="2009" name="Genome Biol.">
        <title>Genomic and genetic analyses of diversity and plant interactions of Pseudomonas fluorescens.</title>
        <authorList>
            <person name="Silby M.W."/>
            <person name="Cerdeno-Tarraga A.M."/>
            <person name="Vernikos G.S."/>
            <person name="Giddens S.R."/>
            <person name="Jackson R.W."/>
            <person name="Preston G.M."/>
            <person name="Zhang X.-X."/>
            <person name="Moon C.D."/>
            <person name="Gehrig S.M."/>
            <person name="Godfrey S.A.C."/>
            <person name="Knight C.G."/>
            <person name="Malone J.G."/>
            <person name="Robinson Z."/>
            <person name="Spiers A.J."/>
            <person name="Harris S."/>
            <person name="Challis G.L."/>
            <person name="Yaxley A.M."/>
            <person name="Harris D."/>
            <person name="Seeger K."/>
            <person name="Murphy L."/>
            <person name="Rutter S."/>
            <person name="Squares R."/>
            <person name="Quail M.A."/>
            <person name="Saunders E."/>
            <person name="Mavromatis K."/>
            <person name="Brettin T.S."/>
            <person name="Bentley S.D."/>
            <person name="Hothersall J."/>
            <person name="Stephens E."/>
            <person name="Thomas C.M."/>
            <person name="Parkhill J."/>
            <person name="Levy S.B."/>
            <person name="Rainey P.B."/>
            <person name="Thomson N.R."/>
        </authorList>
    </citation>
    <scope>NUCLEOTIDE SEQUENCE [LARGE SCALE GENOMIC DNA]</scope>
    <source>
        <strain>Pf0-1</strain>
    </source>
</reference>
<keyword id="KW-0997">Cell inner membrane</keyword>
<keyword id="KW-1003">Cell membrane</keyword>
<keyword id="KW-0472">Membrane</keyword>
<keyword id="KW-0520">NAD</keyword>
<keyword id="KW-0874">Quinone</keyword>
<keyword id="KW-1278">Translocase</keyword>
<keyword id="KW-0812">Transmembrane</keyword>
<keyword id="KW-1133">Transmembrane helix</keyword>
<keyword id="KW-0830">Ubiquinone</keyword>
<feature type="chain" id="PRO_0000240099" description="NADH-quinone oxidoreductase subunit H">
    <location>
        <begin position="1"/>
        <end position="335"/>
    </location>
</feature>
<feature type="transmembrane region" description="Helical" evidence="1">
    <location>
        <begin position="11"/>
        <end position="31"/>
    </location>
</feature>
<feature type="transmembrane region" description="Helical" evidence="1">
    <location>
        <begin position="81"/>
        <end position="101"/>
    </location>
</feature>
<feature type="transmembrane region" description="Helical" evidence="1">
    <location>
        <begin position="114"/>
        <end position="134"/>
    </location>
</feature>
<feature type="transmembrane region" description="Helical" evidence="1">
    <location>
        <begin position="154"/>
        <end position="174"/>
    </location>
</feature>
<feature type="transmembrane region" description="Helical" evidence="1">
    <location>
        <begin position="187"/>
        <end position="207"/>
    </location>
</feature>
<feature type="transmembrane region" description="Helical" evidence="1">
    <location>
        <begin position="238"/>
        <end position="258"/>
    </location>
</feature>
<feature type="transmembrane region" description="Helical" evidence="1">
    <location>
        <begin position="270"/>
        <end position="290"/>
    </location>
</feature>
<feature type="transmembrane region" description="Helical" evidence="1">
    <location>
        <begin position="307"/>
        <end position="327"/>
    </location>
</feature>